<sequence>MEREQDTPWTRSTEHTNIQKRENGQPTQKLGRPNLIQLMDHYLRIMNQVDMHKQTAFWKQWLSLKNPTQESLKTRVLKRWRLFNRQGWTS</sequence>
<organism>
    <name type="scientific">Influenza A virus (strain A/Turkey/Minnesota/501/1978 H6N8)</name>
    <dbReference type="NCBI Taxonomy" id="387259"/>
    <lineage>
        <taxon>Viruses</taxon>
        <taxon>Riboviria</taxon>
        <taxon>Orthornavirae</taxon>
        <taxon>Negarnaviricota</taxon>
        <taxon>Polyploviricotina</taxon>
        <taxon>Insthoviricetes</taxon>
        <taxon>Articulavirales</taxon>
        <taxon>Orthomyxoviridae</taxon>
        <taxon>Alphainfluenzavirus</taxon>
        <taxon>Alphainfluenzavirus influenzae</taxon>
        <taxon>Influenza A virus</taxon>
    </lineage>
</organism>
<feature type="chain" id="PRO_0000278723" description="Protein PB1-F2">
    <location>
        <begin position="1"/>
        <end position="90"/>
    </location>
</feature>
<feature type="region of interest" description="Disordered" evidence="2">
    <location>
        <begin position="1"/>
        <end position="33"/>
    </location>
</feature>
<feature type="region of interest" description="Mitochondrial targeting sequence" evidence="1">
    <location>
        <begin position="65"/>
        <end position="87"/>
    </location>
</feature>
<feature type="compositionally biased region" description="Basic and acidic residues" evidence="2">
    <location>
        <begin position="1"/>
        <end position="23"/>
    </location>
</feature>
<feature type="site" description="Low pathogenicity" evidence="1">
    <location>
        <position position="66"/>
    </location>
</feature>
<protein>
    <recommendedName>
        <fullName evidence="1">Protein PB1-F2</fullName>
    </recommendedName>
</protein>
<proteinExistence type="inferred from homology"/>
<gene>
    <name evidence="1" type="primary">PB1</name>
</gene>
<comment type="function">
    <text evidence="1">Plays an important role in promoting lung pathology in both primary viral infection and secondary bacterial infection. Promotes alteration of mitochondrial morphology, dissipation of mitochondrial membrane potential, and cell death. Alternatively, inhibits the production of interferon in the infected cell at the level of host mitochondrial antiviral signaling MAVS. Its level of expression differs greatly depending on which cell type is infected, in a manner that is independent of the levels of expression of other viral proteins. Monocytic cells are more affected than epithelial cells. Seems to disable virus-infected monocytes or other host innate immune cells. During early stage of infection, predisposes the mitochondria to permeability transition through interaction with host SLC25A6/ANT3 and VDAC1. These proteins participate in the formation of the permeability transition pore complex (PTPC) responsible of the release of mitochondrial products that triggers apoptosis.</text>
</comment>
<comment type="subunit">
    <text evidence="1">Oligomer. Interacts with human SLC25A6/ANT3 and VDAC1. Interacts with host MAVS.</text>
</comment>
<comment type="subcellular location">
    <subcellularLocation>
        <location evidence="1">Host mitochondrion inner membrane</location>
    </subcellularLocation>
    <subcellularLocation>
        <location evidence="1">Host nucleus</location>
    </subcellularLocation>
    <subcellularLocation>
        <location evidence="1">Host cytoplasm</location>
        <location evidence="1">Host cytosol</location>
    </subcellularLocation>
    <text evidence="1">Inner mitochondrial membrane in most cells types. Otherwise is detected in the nucleus and cytosol.</text>
</comment>
<comment type="miscellaneous">
    <text>Is not encoded in all strains, and seems to be dispensable for replication.</text>
</comment>
<comment type="similarity">
    <text evidence="1">Belongs to the influenza viruses PB1-F2 family.</text>
</comment>
<organismHost>
    <name type="scientific">Aves</name>
    <dbReference type="NCBI Taxonomy" id="8782"/>
</organismHost>
<evidence type="ECO:0000255" key="1">
    <source>
        <dbReference type="HAMAP-Rule" id="MF_04064"/>
    </source>
</evidence>
<evidence type="ECO:0000256" key="2">
    <source>
        <dbReference type="SAM" id="MobiDB-lite"/>
    </source>
</evidence>
<name>PB1F2_I78AC</name>
<dbReference type="EMBL" id="CY014777">
    <property type="protein sequence ID" value="ABI84682.1"/>
    <property type="molecule type" value="Genomic_RNA"/>
</dbReference>
<dbReference type="SMR" id="Q0A3Q0"/>
<dbReference type="GO" id="GO:0044164">
    <property type="term" value="C:host cell cytosol"/>
    <property type="evidence" value="ECO:0007669"/>
    <property type="project" value="UniProtKB-SubCell"/>
</dbReference>
<dbReference type="GO" id="GO:0044192">
    <property type="term" value="C:host cell mitochondrial inner membrane"/>
    <property type="evidence" value="ECO:0007669"/>
    <property type="project" value="UniProtKB-SubCell"/>
</dbReference>
<dbReference type="GO" id="GO:0042025">
    <property type="term" value="C:host cell nucleus"/>
    <property type="evidence" value="ECO:0007669"/>
    <property type="project" value="UniProtKB-SubCell"/>
</dbReference>
<dbReference type="GO" id="GO:0016020">
    <property type="term" value="C:membrane"/>
    <property type="evidence" value="ECO:0007669"/>
    <property type="project" value="UniProtKB-UniRule"/>
</dbReference>
<dbReference type="GO" id="GO:0052150">
    <property type="term" value="P:symbiont-mediated perturbation of host apoptosis"/>
    <property type="evidence" value="ECO:0007669"/>
    <property type="project" value="UniProtKB-KW"/>
</dbReference>
<dbReference type="GO" id="GO:0039545">
    <property type="term" value="P:symbiont-mediated suppression of host cytoplasmic pattern recognition receptor signaling pathway via inhibition of MAVS activity"/>
    <property type="evidence" value="ECO:0007669"/>
    <property type="project" value="UniProtKB-KW"/>
</dbReference>
<dbReference type="HAMAP" id="MF_04064">
    <property type="entry name" value="INFV_PB1F2"/>
    <property type="match status" value="1"/>
</dbReference>
<dbReference type="InterPro" id="IPR021045">
    <property type="entry name" value="Flu_proapoptotic_PB1-F2"/>
</dbReference>
<dbReference type="Pfam" id="PF11986">
    <property type="entry name" value="PB1-F2"/>
    <property type="match status" value="1"/>
</dbReference>
<accession>Q0A3Q0</accession>
<keyword id="KW-0053">Apoptosis</keyword>
<keyword id="KW-1035">Host cytoplasm</keyword>
<keyword id="KW-1043">Host membrane</keyword>
<keyword id="KW-1045">Host mitochondrion</keyword>
<keyword id="KW-1046">Host mitochondrion inner membrane</keyword>
<keyword id="KW-1048">Host nucleus</keyword>
<keyword id="KW-0945">Host-virus interaction</keyword>
<keyword id="KW-1090">Inhibition of host innate immune response by virus</keyword>
<keyword id="KW-1097">Inhibition of host MAVS by virus</keyword>
<keyword id="KW-1113">Inhibition of host RLR pathway by virus</keyword>
<keyword id="KW-0472">Membrane</keyword>
<keyword id="KW-1119">Modulation of host cell apoptosis by virus</keyword>
<keyword id="KW-0899">Viral immunoevasion</keyword>
<reference key="1">
    <citation type="journal article" date="2006" name="Science">
        <title>Large-scale sequence analysis of avian influenza isolates.</title>
        <authorList>
            <person name="Obenauer J.C."/>
            <person name="Denson J."/>
            <person name="Mehta P.K."/>
            <person name="Su X."/>
            <person name="Mukatira S."/>
            <person name="Finkelstein D.B."/>
            <person name="Xu X."/>
            <person name="Wang J."/>
            <person name="Ma J."/>
            <person name="Fan Y."/>
            <person name="Rakestraw K.M."/>
            <person name="Webster R.G."/>
            <person name="Hoffmann E."/>
            <person name="Krauss S."/>
            <person name="Zheng J."/>
            <person name="Zhang Z."/>
            <person name="Naeve C.W."/>
        </authorList>
    </citation>
    <scope>NUCLEOTIDE SEQUENCE [GENOMIC RNA]</scope>
</reference>